<dbReference type="EMBL" id="AF026939">
    <property type="protein sequence ID" value="AAB95160.1"/>
    <property type="molecule type" value="mRNA"/>
</dbReference>
<dbReference type="EMBL" id="AF083470">
    <property type="protein sequence ID" value="AAC63524.1"/>
    <property type="molecule type" value="mRNA"/>
</dbReference>
<dbReference type="EMBL" id="U52513">
    <property type="protein sequence ID" value="AAB40606.1"/>
    <property type="molecule type" value="mRNA"/>
</dbReference>
<dbReference type="EMBL" id="BT007284">
    <property type="protein sequence ID" value="AAP35948.1"/>
    <property type="molecule type" value="mRNA"/>
</dbReference>
<dbReference type="EMBL" id="BC001383">
    <property type="protein sequence ID" value="AAH01383.1"/>
    <property type="molecule type" value="mRNA"/>
</dbReference>
<dbReference type="EMBL" id="BC004977">
    <property type="protein sequence ID" value="AAH04977.1"/>
    <property type="molecule type" value="mRNA"/>
</dbReference>
<dbReference type="CCDS" id="CCDS31241.1"/>
<dbReference type="CCDS" id="CCDS7402.1"/>
<dbReference type="RefSeq" id="NP_001026853.1">
    <property type="nucleotide sequence ID" value="NM_001031683.4"/>
</dbReference>
<dbReference type="RefSeq" id="NP_001540.2">
    <property type="nucleotide sequence ID" value="NM_001549.5"/>
</dbReference>
<dbReference type="PDB" id="6C6K">
    <property type="method" value="X-ray"/>
    <property type="resolution" value="2.54 A"/>
    <property type="chains" value="C/D=416-459"/>
</dbReference>
<dbReference type="PDBsum" id="6C6K"/>
<dbReference type="SMR" id="O14879"/>
<dbReference type="BioGRID" id="109660">
    <property type="interactions" value="85"/>
</dbReference>
<dbReference type="CORUM" id="O14879"/>
<dbReference type="DIP" id="DIP-37890N"/>
<dbReference type="FunCoup" id="O14879">
    <property type="interactions" value="734"/>
</dbReference>
<dbReference type="IntAct" id="O14879">
    <property type="interactions" value="67"/>
</dbReference>
<dbReference type="MINT" id="O14879"/>
<dbReference type="STRING" id="9606.ENSP00000360876"/>
<dbReference type="GlyCosmos" id="O14879">
    <property type="glycosylation" value="2 sites, 1 glycan"/>
</dbReference>
<dbReference type="GlyGen" id="O14879">
    <property type="glycosylation" value="3 sites, 1 O-linked glycan (2 sites)"/>
</dbReference>
<dbReference type="iPTMnet" id="O14879"/>
<dbReference type="PhosphoSitePlus" id="O14879"/>
<dbReference type="BioMuta" id="IFIT3"/>
<dbReference type="jPOST" id="O14879"/>
<dbReference type="MassIVE" id="O14879"/>
<dbReference type="PaxDb" id="9606-ENSP00000360883"/>
<dbReference type="PeptideAtlas" id="O14879"/>
<dbReference type="ProteomicsDB" id="48279"/>
<dbReference type="Pumba" id="O14879"/>
<dbReference type="Antibodypedia" id="30262">
    <property type="antibodies" value="272 antibodies from 31 providers"/>
</dbReference>
<dbReference type="CPTC" id="O14879">
    <property type="antibodies" value="1 antibody"/>
</dbReference>
<dbReference type="DNASU" id="3437"/>
<dbReference type="Ensembl" id="ENST00000371811.4">
    <property type="protein sequence ID" value="ENSP00000360876.4"/>
    <property type="gene ID" value="ENSG00000119917.15"/>
</dbReference>
<dbReference type="Ensembl" id="ENST00000371818.9">
    <property type="protein sequence ID" value="ENSP00000360883.4"/>
    <property type="gene ID" value="ENSG00000119917.15"/>
</dbReference>
<dbReference type="Ensembl" id="ENST00000679781.1">
    <property type="protein sequence ID" value="ENSP00000505987.1"/>
    <property type="gene ID" value="ENSG00000119917.15"/>
</dbReference>
<dbReference type="GeneID" id="3437"/>
<dbReference type="KEGG" id="hsa:3437"/>
<dbReference type="MANE-Select" id="ENST00000371818.9">
    <property type="protein sequence ID" value="ENSP00000360883.4"/>
    <property type="RefSeq nucleotide sequence ID" value="NM_001549.6"/>
    <property type="RefSeq protein sequence ID" value="NP_001540.2"/>
</dbReference>
<dbReference type="AGR" id="HGNC:5411"/>
<dbReference type="CTD" id="3437"/>
<dbReference type="DisGeNET" id="3437"/>
<dbReference type="GeneCards" id="IFIT3"/>
<dbReference type="HGNC" id="HGNC:5411">
    <property type="gene designation" value="IFIT3"/>
</dbReference>
<dbReference type="HPA" id="ENSG00000119917">
    <property type="expression patterns" value="Low tissue specificity"/>
</dbReference>
<dbReference type="MIM" id="604650">
    <property type="type" value="gene"/>
</dbReference>
<dbReference type="neXtProt" id="NX_O14879"/>
<dbReference type="OpenTargets" id="ENSG00000119917"/>
<dbReference type="PharmGKB" id="PA29651"/>
<dbReference type="VEuPathDB" id="HostDB:ENSG00000119917"/>
<dbReference type="eggNOG" id="KOG1124">
    <property type="taxonomic scope" value="Eukaryota"/>
</dbReference>
<dbReference type="GeneTree" id="ENSGT00950000182946"/>
<dbReference type="HOGENOM" id="CLU_043482_0_0_1"/>
<dbReference type="InParanoid" id="O14879"/>
<dbReference type="OMA" id="YLCHQIG"/>
<dbReference type="OrthoDB" id="10043504at2759"/>
<dbReference type="PAN-GO" id="O14879">
    <property type="GO annotations" value="3 GO annotations based on evolutionary models"/>
</dbReference>
<dbReference type="PhylomeDB" id="O14879"/>
<dbReference type="TreeFam" id="TF342671"/>
<dbReference type="PathwayCommons" id="O14879"/>
<dbReference type="Reactome" id="R-HSA-909733">
    <property type="pathway name" value="Interferon alpha/beta signaling"/>
</dbReference>
<dbReference type="SignaLink" id="O14879"/>
<dbReference type="BioGRID-ORCS" id="3437">
    <property type="hits" value="10 hits in 1152 CRISPR screens"/>
</dbReference>
<dbReference type="ChiTaRS" id="IFIT3">
    <property type="organism name" value="human"/>
</dbReference>
<dbReference type="GeneWiki" id="IFIT3"/>
<dbReference type="GenomeRNAi" id="3437"/>
<dbReference type="Pharos" id="O14879">
    <property type="development level" value="Tbio"/>
</dbReference>
<dbReference type="PRO" id="PR:O14879"/>
<dbReference type="Proteomes" id="UP000005640">
    <property type="component" value="Chromosome 10"/>
</dbReference>
<dbReference type="RNAct" id="O14879">
    <property type="molecule type" value="protein"/>
</dbReference>
<dbReference type="Bgee" id="ENSG00000119917">
    <property type="expression patterns" value="Expressed in trigeminal ganglion and 194 other cell types or tissues"/>
</dbReference>
<dbReference type="ExpressionAtlas" id="O14879">
    <property type="expression patterns" value="baseline and differential"/>
</dbReference>
<dbReference type="GO" id="GO:0005737">
    <property type="term" value="C:cytoplasm"/>
    <property type="evidence" value="ECO:0000314"/>
    <property type="project" value="UniProtKB"/>
</dbReference>
<dbReference type="GO" id="GO:0005829">
    <property type="term" value="C:cytosol"/>
    <property type="evidence" value="ECO:0000314"/>
    <property type="project" value="HPA"/>
</dbReference>
<dbReference type="GO" id="GO:0005739">
    <property type="term" value="C:mitochondrion"/>
    <property type="evidence" value="ECO:0000314"/>
    <property type="project" value="UniProtKB"/>
</dbReference>
<dbReference type="GO" id="GO:0042802">
    <property type="term" value="F:identical protein binding"/>
    <property type="evidence" value="ECO:0000353"/>
    <property type="project" value="IntAct"/>
</dbReference>
<dbReference type="GO" id="GO:0140374">
    <property type="term" value="P:antiviral innate immune response"/>
    <property type="evidence" value="ECO:0000314"/>
    <property type="project" value="UniProt"/>
</dbReference>
<dbReference type="GO" id="GO:0051607">
    <property type="term" value="P:defense response to virus"/>
    <property type="evidence" value="ECO:0000318"/>
    <property type="project" value="GO_Central"/>
</dbReference>
<dbReference type="GO" id="GO:0043066">
    <property type="term" value="P:negative regulation of apoptotic process"/>
    <property type="evidence" value="ECO:0000314"/>
    <property type="project" value="UniProtKB"/>
</dbReference>
<dbReference type="GO" id="GO:0008285">
    <property type="term" value="P:negative regulation of cell population proliferation"/>
    <property type="evidence" value="ECO:0000314"/>
    <property type="project" value="UniProtKB"/>
</dbReference>
<dbReference type="GO" id="GO:0009615">
    <property type="term" value="P:response to virus"/>
    <property type="evidence" value="ECO:0000315"/>
    <property type="project" value="UniProtKB"/>
</dbReference>
<dbReference type="FunFam" id="1.25.40.10:FF:000036">
    <property type="entry name" value="interferon-induced protein with tetratricopeptide repeats 5"/>
    <property type="match status" value="1"/>
</dbReference>
<dbReference type="Gene3D" id="1.25.40.10">
    <property type="entry name" value="Tetratricopeptide repeat domain"/>
    <property type="match status" value="3"/>
</dbReference>
<dbReference type="InterPro" id="IPR011990">
    <property type="entry name" value="TPR-like_helical_dom_sf"/>
</dbReference>
<dbReference type="InterPro" id="IPR019734">
    <property type="entry name" value="TPR_rpt"/>
</dbReference>
<dbReference type="PANTHER" id="PTHR10271">
    <property type="entry name" value="INTERFERON-INDUCED PROTEIN WITH TETRATRICOPEPTIDE REPEATS"/>
    <property type="match status" value="1"/>
</dbReference>
<dbReference type="PANTHER" id="PTHR10271:SF3">
    <property type="entry name" value="INTERFERON-INDUCED PROTEIN WITH TETRATRICOPEPTIDE REPEATS 3"/>
    <property type="match status" value="1"/>
</dbReference>
<dbReference type="Pfam" id="PF13424">
    <property type="entry name" value="TPR_12"/>
    <property type="match status" value="1"/>
</dbReference>
<dbReference type="Pfam" id="PF13176">
    <property type="entry name" value="TPR_7"/>
    <property type="match status" value="1"/>
</dbReference>
<dbReference type="Pfam" id="PF13181">
    <property type="entry name" value="TPR_8"/>
    <property type="match status" value="2"/>
</dbReference>
<dbReference type="SMART" id="SM00028">
    <property type="entry name" value="TPR"/>
    <property type="match status" value="5"/>
</dbReference>
<dbReference type="SUPFAM" id="SSF48452">
    <property type="entry name" value="TPR-like"/>
    <property type="match status" value="2"/>
</dbReference>
<dbReference type="PROSITE" id="PS50005">
    <property type="entry name" value="TPR"/>
    <property type="match status" value="5"/>
</dbReference>
<dbReference type="PROSITE" id="PS50293">
    <property type="entry name" value="TPR_REGION"/>
    <property type="match status" value="1"/>
</dbReference>
<accession>O14879</accession>
<accession>Q99634</accession>
<accession>Q9BSK7</accession>
<name>IFIT3_HUMAN</name>
<reference key="1">
    <citation type="journal article" date="1997" name="Proc. Natl. Acad. Sci. U.S.A.">
        <title>Use of differential display analysis to assess the effect of human cytomegalovirus infection on the accumulation of cellular RNAs: induction of interferon-responsive RNAs.</title>
        <authorList>
            <person name="Zhu H."/>
            <person name="Cong J.-P."/>
            <person name="Shenk T."/>
        </authorList>
    </citation>
    <scope>NUCLEOTIDE SEQUENCE [MRNA]</scope>
    <source>
        <tissue>Foreskin</tissue>
    </source>
</reference>
<reference key="2">
    <citation type="journal article" date="1998" name="Genomics">
        <title>IFI60/ISG60/IFIT4, a new member of the human IFI54/IFIT2 family of interferon-stimulated genes.</title>
        <authorList>
            <person name="de Veer M.J."/>
            <person name="Sim H."/>
            <person name="Whisstock J.C."/>
            <person name="Devenish R.J."/>
            <person name="Ralph S.J."/>
        </authorList>
    </citation>
    <scope>NUCLEOTIDE SEQUENCE [MRNA]</scope>
</reference>
<reference key="3">
    <citation type="submission" date="1996-03" db="EMBL/GenBank/DDBJ databases">
        <title>RIG-G, a novel gene induced by ATRA in acute promyelocytic leukemia cells, is a new member of the ISG family.</title>
        <authorList>
            <person name="Yu M."/>
            <person name="Tong J."/>
            <person name="Mao M."/>
            <person name="Chen S."/>
            <person name="Chen Z."/>
        </authorList>
    </citation>
    <scope>NUCLEOTIDE SEQUENCE [MRNA]</scope>
</reference>
<reference key="4">
    <citation type="submission" date="2003-05" db="EMBL/GenBank/DDBJ databases">
        <title>Cloning of human full-length CDSs in BD Creator(TM) system donor vector.</title>
        <authorList>
            <person name="Kalnine N."/>
            <person name="Chen X."/>
            <person name="Rolfs A."/>
            <person name="Halleck A."/>
            <person name="Hines L."/>
            <person name="Eisenstein S."/>
            <person name="Koundinya M."/>
            <person name="Raphael J."/>
            <person name="Moreira D."/>
            <person name="Kelley T."/>
            <person name="LaBaer J."/>
            <person name="Lin Y."/>
            <person name="Phelan M."/>
            <person name="Farmer A."/>
        </authorList>
    </citation>
    <scope>NUCLEOTIDE SEQUENCE [LARGE SCALE MRNA]</scope>
</reference>
<reference key="5">
    <citation type="journal article" date="2004" name="Genome Res.">
        <title>The status, quality, and expansion of the NIH full-length cDNA project: the Mammalian Gene Collection (MGC).</title>
        <authorList>
            <consortium name="The MGC Project Team"/>
        </authorList>
    </citation>
    <scope>NUCLEOTIDE SEQUENCE [LARGE SCALE MRNA]</scope>
    <source>
        <tissue>Skin</tissue>
    </source>
</reference>
<reference key="6">
    <citation type="journal article" date="2006" name="Proc. Natl. Acad. Sci. U.S.A.">
        <title>RIG-G as a key mediator of the antiproliferative activity of interferon-related pathways through enhancing p21 and p27 proteins.</title>
        <authorList>
            <person name="Xiao S."/>
            <person name="Li D."/>
            <person name="Zhu H.Q."/>
            <person name="Song M.G."/>
            <person name="Pan X.R."/>
            <person name="Jia P.M."/>
            <person name="Peng L.L."/>
            <person name="Dou A.X."/>
            <person name="Chen G.Q."/>
            <person name="Chen S.J."/>
            <person name="Chen Z."/>
            <person name="Tong J.H."/>
        </authorList>
    </citation>
    <scope>FUNCTION</scope>
    <scope>INDUCTION</scope>
    <scope>SUBCELLULAR LOCATION</scope>
    <scope>INTERACTION WITH COPS5</scope>
</reference>
<reference key="7">
    <citation type="journal article" date="2008" name="Arthritis Res. Ther.">
        <title>Interferon-induced protein IFIT4 is associated with systemic lupus erythematosus and promotes differentiation of monocytes into dendritic cell-like cells.</title>
        <authorList>
            <person name="Huang X."/>
            <person name="Shen N."/>
            <person name="Bao C."/>
            <person name="Gu Y."/>
            <person name="Wu L."/>
            <person name="Chen S."/>
        </authorList>
    </citation>
    <scope>SUBCELLULAR LOCATION</scope>
    <scope>TISSUE SPECIFICITY</scope>
</reference>
<reference key="8">
    <citation type="journal article" date="2008" name="Mol. Cell">
        <title>Kinase-selective enrichment enables quantitative phosphoproteomics of the kinome across the cell cycle.</title>
        <authorList>
            <person name="Daub H."/>
            <person name="Olsen J.V."/>
            <person name="Bairlein M."/>
            <person name="Gnad F."/>
            <person name="Oppermann F.S."/>
            <person name="Korner R."/>
            <person name="Greff Z."/>
            <person name="Keri G."/>
            <person name="Stemmann O."/>
            <person name="Mann M."/>
        </authorList>
    </citation>
    <scope>PHOSPHORYLATION [LARGE SCALE ANALYSIS] AT SER-203 AND SER-237</scope>
    <scope>IDENTIFICATION BY MASS SPECTROMETRY [LARGE SCALE ANALYSIS]</scope>
    <source>
        <tissue>Cervix carcinoma</tissue>
    </source>
</reference>
<reference key="9">
    <citation type="journal article" date="2008" name="Proc. Natl. Acad. Sci. U.S.A.">
        <title>A quantitative atlas of mitotic phosphorylation.</title>
        <authorList>
            <person name="Dephoure N."/>
            <person name="Zhou C."/>
            <person name="Villen J."/>
            <person name="Beausoleil S.A."/>
            <person name="Bakalarski C.E."/>
            <person name="Elledge S.J."/>
            <person name="Gygi S.P."/>
        </authorList>
    </citation>
    <scope>PHOSPHORYLATION [LARGE SCALE ANALYSIS] AT SER-203 AND SER-478</scope>
    <scope>IDENTIFICATION BY MASS SPECTROMETRY [LARGE SCALE ANALYSIS]</scope>
    <source>
        <tissue>Cervix carcinoma</tissue>
    </source>
</reference>
<reference key="10">
    <citation type="journal article" date="2010" name="J. Virol.">
        <title>Identification of alpha interferon-induced genes associated with antiviral activity in Daudi cells and characterization of IFIT3 as a novel antiviral gene.</title>
        <authorList>
            <person name="Schmeisser H."/>
            <person name="Mejido J."/>
            <person name="Balinsky C.A."/>
            <person name="Morrow A.N."/>
            <person name="Clark C.R."/>
            <person name="Zhao T."/>
            <person name="Zoon K.C."/>
        </authorList>
    </citation>
    <scope>FUNCTION</scope>
</reference>
<reference key="11">
    <citation type="journal article" date="2010" name="Sci. Signal.">
        <title>Quantitative phosphoproteomics reveals widespread full phosphorylation site occupancy during mitosis.</title>
        <authorList>
            <person name="Olsen J.V."/>
            <person name="Vermeulen M."/>
            <person name="Santamaria A."/>
            <person name="Kumar C."/>
            <person name="Miller M.L."/>
            <person name="Jensen L.J."/>
            <person name="Gnad F."/>
            <person name="Cox J."/>
            <person name="Jensen T.S."/>
            <person name="Nigg E.A."/>
            <person name="Brunak S."/>
            <person name="Mann M."/>
        </authorList>
    </citation>
    <scope>PHOSPHORYLATION [LARGE SCALE ANALYSIS] AT SER-203</scope>
    <scope>IDENTIFICATION BY MASS SPECTROMETRY [LARGE SCALE ANALYSIS]</scope>
    <source>
        <tissue>Cervix carcinoma</tissue>
    </source>
</reference>
<reference key="12">
    <citation type="journal article" date="2011" name="BMC Syst. Biol.">
        <title>Initial characterization of the human central proteome.</title>
        <authorList>
            <person name="Burkard T.R."/>
            <person name="Planyavsky M."/>
            <person name="Kaupe I."/>
            <person name="Breitwieser F.P."/>
            <person name="Buerckstuemmer T."/>
            <person name="Bennett K.L."/>
            <person name="Superti-Furga G."/>
            <person name="Colinge J."/>
        </authorList>
    </citation>
    <scope>IDENTIFICATION BY MASS SPECTROMETRY [LARGE SCALE ANALYSIS]</scope>
</reference>
<reference key="13">
    <citation type="journal article" date="2011" name="J. Biol. Chem.">
        <title>The interferon stimulated gene 54 promotes apoptosis.</title>
        <authorList>
            <person name="Stawowczyk M."/>
            <person name="Van Scoy S."/>
            <person name="Kumar K.P."/>
            <person name="Reich N.C."/>
        </authorList>
    </citation>
    <scope>FUNCTION</scope>
    <scope>INTERACTION WITH IFIT2</scope>
</reference>
<reference key="14">
    <citation type="journal article" date="2011" name="J. Immunol.">
        <title>IFN-induced TPR protein IFIT3 potentiates antiviral signaling by bridging MAVS and TBK1.</title>
        <authorList>
            <person name="Liu X.Y."/>
            <person name="Chen W."/>
            <person name="Wei B."/>
            <person name="Shan Y.F."/>
            <person name="Wang C."/>
        </authorList>
    </citation>
    <scope>FUNCTION</scope>
    <scope>SUBCELLULAR LOCATION</scope>
    <scope>INTERACTION WITH MAVS; TBK1; TRAF6 AND RIGI</scope>
</reference>
<reference key="15">
    <citation type="journal article" date="2011" name="J. Interferon Cytokine Res.">
        <title>The ISG56/IFIT1 gene family.</title>
        <authorList>
            <person name="Fensterl V."/>
            <person name="Sen G.C."/>
        </authorList>
    </citation>
    <scope>REVIEW</scope>
</reference>
<reference key="16">
    <citation type="journal article" date="2011" name="Nat. Immunol.">
        <title>IFIT1 is an antiviral protein that recognizes 5'-triphosphate RNA.</title>
        <authorList>
            <person name="Pichlmair A."/>
            <person name="Lassnig C."/>
            <person name="Eberle C.A."/>
            <person name="Gorna M.W."/>
            <person name="Baumann C.L."/>
            <person name="Burkard T.R."/>
            <person name="Buerckstuemmer T."/>
            <person name="Stefanovic A."/>
            <person name="Krieger S."/>
            <person name="Bennett K.L."/>
            <person name="Ruelicke T."/>
            <person name="Weber F."/>
            <person name="Colinge J."/>
            <person name="Mueller M."/>
            <person name="Superti-Furga G."/>
        </authorList>
    </citation>
    <scope>FUNCTION</scope>
    <scope>INTERACTION WITH IFIT1 AND IFIT2</scope>
</reference>
<reference key="17">
    <citation type="journal article" date="2014" name="J. Proteomics">
        <title>An enzyme assisted RP-RPLC approach for in-depth analysis of human liver phosphoproteome.</title>
        <authorList>
            <person name="Bian Y."/>
            <person name="Song C."/>
            <person name="Cheng K."/>
            <person name="Dong M."/>
            <person name="Wang F."/>
            <person name="Huang J."/>
            <person name="Sun D."/>
            <person name="Wang L."/>
            <person name="Ye M."/>
            <person name="Zou H."/>
        </authorList>
    </citation>
    <scope>PHOSPHORYLATION [LARGE SCALE ANALYSIS] AT SER-478</scope>
    <scope>IDENTIFICATION BY MASS SPECTROMETRY [LARGE SCALE ANALYSIS]</scope>
    <source>
        <tissue>Liver</tissue>
    </source>
</reference>
<proteinExistence type="evidence at protein level"/>
<comment type="function">
    <text evidence="2 4 5 6 7">IFN-induced antiviral protein which acts as an inhibitor of cellular as well as viral processes, cell migration, proliferation, signaling, and viral replication. Enhances MAVS-mediated host antiviral responses by serving as an adapter bridging TBK1 to MAVS which leads to the activation of TBK1 and phosphorylation of IRF3 and phosphorylated IRF3 translocates into nucleus to promote antiviral gene transcription. Exhibits an antiproliferative activity via the up-regulation of cell cycle negative regulators CDKN1A/p21 and CDKN1B/p27. Normally, CDKN1B/p27 turnover is regulated by COPS5, which binds CDKN1B/p27 in the nucleus and exports it to the cytoplasm for ubiquitin-dependent degradation. IFIT3 sequesters COPS5 in the cytoplasm, thereby increasing nuclear CDKN1B/p27 protein levels. Up-regulates CDKN1A/p21 by down-regulating MYC, a repressor of CDKN1A/p21. Can negatively regulate the apoptotic effects of IFIT2.</text>
</comment>
<comment type="subunit">
    <text evidence="2 5 6 7">Component of an interferon-dependent multiprotein complex, at least composed of IFIT1, IFIT2 and IFIT3 (PubMed:21642987). Interacts with IFIT1 and IFIT2 (PubMed:21190939, PubMed:21642987). Interacts (via N-terminus) with MAVS, TBK1, TRAF6 and RIGI (PubMed:21813773). Interacts with COPS5 (PubMed:17050680).</text>
</comment>
<comment type="interaction">
    <interactant intactId="EBI-745127">
        <id>O14879</id>
    </interactant>
    <interactant intactId="EBI-295634">
        <id>Q16543</id>
        <label>CDC37</label>
    </interactant>
    <organismsDiffer>false</organismsDiffer>
    <experiments>4</experiments>
</comment>
<comment type="interaction">
    <interactant intactId="EBI-745127">
        <id>O14879</id>
    </interactant>
    <interactant intactId="EBI-594661">
        <id>Q92905</id>
        <label>COPS5</label>
    </interactant>
    <organismsDiffer>false</organismsDiffer>
    <experiments>4</experiments>
</comment>
<comment type="interaction">
    <interactant intactId="EBI-745127">
        <id>O14879</id>
    </interactant>
    <interactant intactId="EBI-748597">
        <id>Q05D60</id>
        <label>DEUP1</label>
    </interactant>
    <organismsDiffer>false</organismsDiffer>
    <experiments>4</experiments>
</comment>
<comment type="interaction">
    <interactant intactId="EBI-745127">
        <id>O14879</id>
    </interactant>
    <interactant intactId="EBI-10226698">
        <id>Q0P5U8</id>
        <label>FLJ90650</label>
    </interactant>
    <organismsDiffer>false</organismsDiffer>
    <experiments>3</experiments>
</comment>
<comment type="interaction">
    <interactant intactId="EBI-745127">
        <id>O14879</id>
    </interactant>
    <interactant intactId="EBI-2514791">
        <id>Q96CS2</id>
        <label>HAUS1</label>
    </interactant>
    <organismsDiffer>false</organismsDiffer>
    <experiments>3</experiments>
</comment>
<comment type="interaction">
    <interactant intactId="EBI-745127">
        <id>O14879</id>
    </interactant>
    <interactant intactId="EBI-745117">
        <id>P09914</id>
        <label>IFIT1</label>
    </interactant>
    <organismsDiffer>false</organismsDiffer>
    <experiments>12</experiments>
</comment>
<comment type="interaction">
    <interactant intactId="EBI-745127">
        <id>O14879</id>
    </interactant>
    <interactant intactId="EBI-3507164">
        <id>Q5T764</id>
        <label>IFIT1B</label>
    </interactant>
    <organismsDiffer>false</organismsDiffer>
    <experiments>6</experiments>
</comment>
<comment type="interaction">
    <interactant intactId="EBI-745127">
        <id>O14879</id>
    </interactant>
    <interactant intactId="EBI-3507167">
        <id>P09913</id>
        <label>IFIT2</label>
    </interactant>
    <organismsDiffer>false</organismsDiffer>
    <experiments>7</experiments>
</comment>
<comment type="interaction">
    <interactant intactId="EBI-745127">
        <id>O14879</id>
    </interactant>
    <interactant intactId="EBI-746217">
        <id>Q8IZ03</id>
        <label>IFIT2</label>
    </interactant>
    <organismsDiffer>false</organismsDiffer>
    <experiments>4</experiments>
</comment>
<comment type="interaction">
    <interactant intactId="EBI-745127">
        <id>O14879</id>
    </interactant>
    <interactant intactId="EBI-745127">
        <id>O14879</id>
        <label>IFIT3</label>
    </interactant>
    <organismsDiffer>false</organismsDiffer>
    <experiments>3</experiments>
</comment>
<comment type="interaction">
    <interactant intactId="EBI-745127">
        <id>O14879</id>
    </interactant>
    <interactant intactId="EBI-2841953">
        <id>Q8IXX5</id>
        <label>TMEM183A</label>
    </interactant>
    <organismsDiffer>false</organismsDiffer>
    <experiments>7</experiments>
</comment>
<comment type="interaction">
    <interactant intactId="EBI-745127">
        <id>O14879</id>
    </interactant>
    <interactant intactId="EBI-12123928">
        <id>P09493-10</id>
        <label>TPM1</label>
    </interactant>
    <organismsDiffer>false</organismsDiffer>
    <experiments>4</experiments>
</comment>
<comment type="interaction">
    <interactant intactId="EBI-745127">
        <id>O14879</id>
    </interactant>
    <interactant intactId="EBI-355607">
        <id>P06753</id>
        <label>TPM3</label>
    </interactant>
    <organismsDiffer>false</organismsDiffer>
    <experiments>5</experiments>
</comment>
<comment type="interaction">
    <interactant intactId="EBI-745127">
        <id>O14879</id>
    </interactant>
    <interactant intactId="EBI-10184033">
        <id>Q5VU62</id>
        <label>TPM3</label>
    </interactant>
    <organismsDiffer>false</organismsDiffer>
    <experiments>3</experiments>
</comment>
<comment type="subcellular location">
    <subcellularLocation>
        <location evidence="2 3">Cytoplasm</location>
    </subcellularLocation>
    <subcellularLocation>
        <location evidence="7">Mitochondrion</location>
    </subcellularLocation>
</comment>
<comment type="tissue specificity">
    <text evidence="3">Expression significantly higher in peripheral blood mononuclear cells (PBMCs) and monocytes from systemic lupus erythematosus (SLE) patients than in those from healthy individuals (at protein level). Spleen, lung, leukocytes, lymph nodes, placenta, bone marrow and fetal liver.</text>
</comment>
<comment type="induction">
    <text evidence="2">By type I interferons, dsRNAs and viruses.</text>
</comment>
<comment type="similarity">
    <text evidence="8">Belongs to the IFIT family.</text>
</comment>
<keyword id="KW-0002">3D-structure</keyword>
<keyword id="KW-0051">Antiviral defense</keyword>
<keyword id="KW-0963">Cytoplasm</keyword>
<keyword id="KW-0391">Immunity</keyword>
<keyword id="KW-0399">Innate immunity</keyword>
<keyword id="KW-0496">Mitochondrion</keyword>
<keyword id="KW-0597">Phosphoprotein</keyword>
<keyword id="KW-1267">Proteomics identification</keyword>
<keyword id="KW-1185">Reference proteome</keyword>
<keyword id="KW-0677">Repeat</keyword>
<keyword id="KW-0802">TPR repeat</keyword>
<evidence type="ECO:0000256" key="1">
    <source>
        <dbReference type="SAM" id="MobiDB-lite"/>
    </source>
</evidence>
<evidence type="ECO:0000269" key="2">
    <source>
    </source>
</evidence>
<evidence type="ECO:0000269" key="3">
    <source>
    </source>
</evidence>
<evidence type="ECO:0000269" key="4">
    <source>
    </source>
</evidence>
<evidence type="ECO:0000269" key="5">
    <source>
    </source>
</evidence>
<evidence type="ECO:0000269" key="6">
    <source>
    </source>
</evidence>
<evidence type="ECO:0000269" key="7">
    <source>
    </source>
</evidence>
<evidence type="ECO:0000305" key="8"/>
<evidence type="ECO:0007744" key="9">
    <source>
    </source>
</evidence>
<evidence type="ECO:0007744" key="10">
    <source>
    </source>
</evidence>
<evidence type="ECO:0007744" key="11">
    <source>
    </source>
</evidence>
<evidence type="ECO:0007744" key="12">
    <source>
    </source>
</evidence>
<evidence type="ECO:0007829" key="13">
    <source>
        <dbReference type="PDB" id="6C6K"/>
    </source>
</evidence>
<organism>
    <name type="scientific">Homo sapiens</name>
    <name type="common">Human</name>
    <dbReference type="NCBI Taxonomy" id="9606"/>
    <lineage>
        <taxon>Eukaryota</taxon>
        <taxon>Metazoa</taxon>
        <taxon>Chordata</taxon>
        <taxon>Craniata</taxon>
        <taxon>Vertebrata</taxon>
        <taxon>Euteleostomi</taxon>
        <taxon>Mammalia</taxon>
        <taxon>Eutheria</taxon>
        <taxon>Euarchontoglires</taxon>
        <taxon>Primates</taxon>
        <taxon>Haplorrhini</taxon>
        <taxon>Catarrhini</taxon>
        <taxon>Hominidae</taxon>
        <taxon>Homo</taxon>
    </lineage>
</organism>
<sequence length="490" mass="55985">MSEVTKNSLEKILPQLKCHFTWNLFKEDSVSRDLEDRVCNQIEFLNTEFKATMYNLLAYIKHLDGNNEAALECLRQAEELIQQEHADQAEIRSLVTWGNYAWVYYHLGRLSDAQIYVDKVKQTCKKFSNPYSIEYSELDCEEGWTQLKCGRNERAKVCFEKALEEKPNNPEFSSGLAIAMYHLDNHPEKQFSTDVLKQAIELSPDNQYVKVLLGLKLQKMNKEAEGEQFVEEALEKSPCQTDVLRSAAKFYRRKGDLDKAIELFQRVLESTPNNGYLYHQIGCCYKAKVRQMQNTGESEASGNKEMIEALKQYAMDYSNKALEKGLNPLNAYSDLAEFLETECYQTPFNKEVPDAEKQQSHQRYCNLQKYNGKSEDTAVQHGLEGLSISKKSTDKEEIKDQPQNVSENLLPQNAPNYWYLQGLIHKQNGDLLQAAKCYEKELGRLLRDAPSGIGSIFLSASELEDGSEEMGQGAVSSSPRELLSNSEQLN</sequence>
<gene>
    <name type="primary">IFIT3</name>
    <name type="synonym">CIG-49</name>
    <name type="synonym">IFI60</name>
    <name type="synonym">IFIT4</name>
    <name type="synonym">ISG60</name>
</gene>
<protein>
    <recommendedName>
        <fullName>Interferon-induced protein with tetratricopeptide repeats 3</fullName>
        <shortName>IFIT-3</shortName>
    </recommendedName>
    <alternativeName>
        <fullName>CIG49</fullName>
    </alternativeName>
    <alternativeName>
        <fullName>ISG-60</fullName>
    </alternativeName>
    <alternativeName>
        <fullName>Interferon-induced 60 kDa protein</fullName>
        <shortName>IFI-60K</shortName>
    </alternativeName>
    <alternativeName>
        <fullName>Interferon-induced protein with tetratricopeptide repeats 4</fullName>
        <shortName>IFIT-4</shortName>
    </alternativeName>
    <alternativeName>
        <fullName>Retinoic acid-induced gene G protein</fullName>
        <shortName>P60</shortName>
        <shortName>RIG-G</shortName>
    </alternativeName>
</protein>
<feature type="chain" id="PRO_0000106349" description="Interferon-induced protein with tetratricopeptide repeats 3">
    <location>
        <begin position="1"/>
        <end position="490"/>
    </location>
</feature>
<feature type="repeat" description="TPR 1">
    <location>
        <begin position="51"/>
        <end position="84"/>
    </location>
</feature>
<feature type="repeat" description="TPR 2">
    <location>
        <begin position="94"/>
        <end position="127"/>
    </location>
</feature>
<feature type="repeat" description="TPR 3">
    <location>
        <begin position="136"/>
        <end position="169"/>
    </location>
</feature>
<feature type="repeat" description="TPR 4">
    <location>
        <begin position="172"/>
        <end position="206"/>
    </location>
</feature>
<feature type="repeat" description="TPR 5">
    <location>
        <begin position="207"/>
        <end position="240"/>
    </location>
</feature>
<feature type="repeat" description="TPR 6">
    <location>
        <begin position="241"/>
        <end position="274"/>
    </location>
</feature>
<feature type="repeat" description="TPR 7">
    <location>
        <begin position="415"/>
        <end position="448"/>
    </location>
</feature>
<feature type="repeat" description="TPR 8">
    <location>
        <begin position="450"/>
        <end position="481"/>
    </location>
</feature>
<feature type="region of interest" description="Disordered" evidence="1">
    <location>
        <begin position="467"/>
        <end position="490"/>
    </location>
</feature>
<feature type="compositionally biased region" description="Polar residues" evidence="1">
    <location>
        <begin position="474"/>
        <end position="490"/>
    </location>
</feature>
<feature type="modified residue" description="Phosphoserine" evidence="9 10 11">
    <location>
        <position position="203"/>
    </location>
</feature>
<feature type="modified residue" description="Phosphoserine" evidence="10">
    <location>
        <position position="237"/>
    </location>
</feature>
<feature type="modified residue" description="Phosphoserine" evidence="9 12">
    <location>
        <position position="478"/>
    </location>
</feature>
<feature type="sequence conflict" description="In Ref. 5; AAH04977." evidence="8" ref="5">
    <original>F</original>
    <variation>S</variation>
    <location>
        <position position="44"/>
    </location>
</feature>
<feature type="sequence conflict" description="In Ref. 2; AAB40606." evidence="8" ref="2">
    <original>Q</original>
    <variation>QQ</variation>
    <location>
        <position position="359"/>
    </location>
</feature>
<feature type="sequence conflict" description="In Ref. 2; AAB40606." evidence="8" ref="2">
    <location>
        <position position="435"/>
    </location>
</feature>
<feature type="helix" evidence="13">
    <location>
        <begin position="417"/>
        <end position="428"/>
    </location>
</feature>
<feature type="helix" evidence="13">
    <location>
        <begin position="431"/>
        <end position="445"/>
    </location>
</feature>
<feature type="turn" evidence="13">
    <location>
        <begin position="446"/>
        <end position="448"/>
    </location>
</feature>
<feature type="helix" evidence="13">
    <location>
        <begin position="453"/>
        <end position="457"/>
    </location>
</feature>